<dbReference type="EC" id="5.2.1.8" evidence="1"/>
<dbReference type="EMBL" id="CP000527">
    <property type="protein sequence ID" value="ABM28752.1"/>
    <property type="molecule type" value="Genomic_DNA"/>
</dbReference>
<dbReference type="RefSeq" id="WP_011792451.1">
    <property type="nucleotide sequence ID" value="NC_008751.1"/>
</dbReference>
<dbReference type="SMR" id="A1VE86"/>
<dbReference type="KEGG" id="dvl:Dvul_1735"/>
<dbReference type="HOGENOM" id="CLU_033058_3_1_7"/>
<dbReference type="Proteomes" id="UP000009173">
    <property type="component" value="Chromosome"/>
</dbReference>
<dbReference type="GO" id="GO:0005737">
    <property type="term" value="C:cytoplasm"/>
    <property type="evidence" value="ECO:0007669"/>
    <property type="project" value="UniProtKB-SubCell"/>
</dbReference>
<dbReference type="GO" id="GO:0003755">
    <property type="term" value="F:peptidyl-prolyl cis-trans isomerase activity"/>
    <property type="evidence" value="ECO:0007669"/>
    <property type="project" value="UniProtKB-UniRule"/>
</dbReference>
<dbReference type="GO" id="GO:0044183">
    <property type="term" value="F:protein folding chaperone"/>
    <property type="evidence" value="ECO:0007669"/>
    <property type="project" value="TreeGrafter"/>
</dbReference>
<dbReference type="GO" id="GO:0043022">
    <property type="term" value="F:ribosome binding"/>
    <property type="evidence" value="ECO:0007669"/>
    <property type="project" value="TreeGrafter"/>
</dbReference>
<dbReference type="GO" id="GO:0051083">
    <property type="term" value="P:'de novo' cotranslational protein folding"/>
    <property type="evidence" value="ECO:0007669"/>
    <property type="project" value="TreeGrafter"/>
</dbReference>
<dbReference type="GO" id="GO:0051301">
    <property type="term" value="P:cell division"/>
    <property type="evidence" value="ECO:0007669"/>
    <property type="project" value="UniProtKB-KW"/>
</dbReference>
<dbReference type="GO" id="GO:0061077">
    <property type="term" value="P:chaperone-mediated protein folding"/>
    <property type="evidence" value="ECO:0007669"/>
    <property type="project" value="TreeGrafter"/>
</dbReference>
<dbReference type="GO" id="GO:0015031">
    <property type="term" value="P:protein transport"/>
    <property type="evidence" value="ECO:0007669"/>
    <property type="project" value="UniProtKB-UniRule"/>
</dbReference>
<dbReference type="GO" id="GO:0043335">
    <property type="term" value="P:protein unfolding"/>
    <property type="evidence" value="ECO:0007669"/>
    <property type="project" value="TreeGrafter"/>
</dbReference>
<dbReference type="Gene3D" id="3.10.50.40">
    <property type="match status" value="1"/>
</dbReference>
<dbReference type="Gene3D" id="3.30.70.1050">
    <property type="entry name" value="Trigger factor ribosome-binding domain"/>
    <property type="match status" value="1"/>
</dbReference>
<dbReference type="Gene3D" id="1.10.3120.10">
    <property type="entry name" value="Trigger factor, C-terminal domain"/>
    <property type="match status" value="1"/>
</dbReference>
<dbReference type="HAMAP" id="MF_00303">
    <property type="entry name" value="Trigger_factor_Tig"/>
    <property type="match status" value="1"/>
</dbReference>
<dbReference type="InterPro" id="IPR046357">
    <property type="entry name" value="PPIase_dom_sf"/>
</dbReference>
<dbReference type="InterPro" id="IPR005215">
    <property type="entry name" value="Trig_fac"/>
</dbReference>
<dbReference type="InterPro" id="IPR008880">
    <property type="entry name" value="Trigger_fac_C"/>
</dbReference>
<dbReference type="InterPro" id="IPR037041">
    <property type="entry name" value="Trigger_fac_C_sf"/>
</dbReference>
<dbReference type="InterPro" id="IPR008881">
    <property type="entry name" value="Trigger_fac_ribosome-bd_bac"/>
</dbReference>
<dbReference type="InterPro" id="IPR036611">
    <property type="entry name" value="Trigger_fac_ribosome-bd_sf"/>
</dbReference>
<dbReference type="InterPro" id="IPR027304">
    <property type="entry name" value="Trigger_fact/SurA_dom_sf"/>
</dbReference>
<dbReference type="NCBIfam" id="TIGR00115">
    <property type="entry name" value="tig"/>
    <property type="match status" value="1"/>
</dbReference>
<dbReference type="PANTHER" id="PTHR30560">
    <property type="entry name" value="TRIGGER FACTOR CHAPERONE AND PEPTIDYL-PROLYL CIS/TRANS ISOMERASE"/>
    <property type="match status" value="1"/>
</dbReference>
<dbReference type="PANTHER" id="PTHR30560:SF3">
    <property type="entry name" value="TRIGGER FACTOR-LIKE PROTEIN TIG, CHLOROPLASTIC"/>
    <property type="match status" value="1"/>
</dbReference>
<dbReference type="Pfam" id="PF05698">
    <property type="entry name" value="Trigger_C"/>
    <property type="match status" value="1"/>
</dbReference>
<dbReference type="Pfam" id="PF05697">
    <property type="entry name" value="Trigger_N"/>
    <property type="match status" value="1"/>
</dbReference>
<dbReference type="PIRSF" id="PIRSF003095">
    <property type="entry name" value="Trigger_factor"/>
    <property type="match status" value="1"/>
</dbReference>
<dbReference type="SUPFAM" id="SSF54534">
    <property type="entry name" value="FKBP-like"/>
    <property type="match status" value="1"/>
</dbReference>
<dbReference type="SUPFAM" id="SSF109998">
    <property type="entry name" value="Triger factor/SurA peptide-binding domain-like"/>
    <property type="match status" value="1"/>
</dbReference>
<dbReference type="SUPFAM" id="SSF102735">
    <property type="entry name" value="Trigger factor ribosome-binding domain"/>
    <property type="match status" value="1"/>
</dbReference>
<sequence>MEYKVEDVSPVKKKVNVTVPVEEVDAALGAAIAMYRTSVNLDGFRKGKVPASIVENRFRKEIYAEATQDLVNVHINEIVTSLEVSPLSRIDFDGGELERGKEFSYTISFEVMPQFDLPDYEGFAVEQEKAVVDEKEVDEVIARIRRNMAELVPVAETRPGADGDVVVLDFAAFENGEPIEGVSAENFQLSLGEKQSLEDFENLVKTIPAGQEAEGPITFPDDFLNPDFAGKTVTMKVKVHAVKERRLPEIDDALAQKAGGFESMEKMRETVVTSYMQSREQLHKATAQKSMLDKLLKMVDFALPESMVDMYVGNLIEDMRVKMERQGRGLESLGKTPEQLREQVLPEAQQIARSQIFLLAAGRKEAVEVSEQEVDGQLQQLAMRSGQDFDTLKDYYVRNGLIFNLRDRLIADKAMDAIYAKANVTMVDPAPAA</sequence>
<protein>
    <recommendedName>
        <fullName evidence="1">Trigger factor</fullName>
        <shortName evidence="1">TF</shortName>
        <ecNumber evidence="1">5.2.1.8</ecNumber>
    </recommendedName>
    <alternativeName>
        <fullName evidence="1">PPIase</fullName>
    </alternativeName>
</protein>
<evidence type="ECO:0000255" key="1">
    <source>
        <dbReference type="HAMAP-Rule" id="MF_00303"/>
    </source>
</evidence>
<keyword id="KW-0131">Cell cycle</keyword>
<keyword id="KW-0132">Cell division</keyword>
<keyword id="KW-0143">Chaperone</keyword>
<keyword id="KW-0963">Cytoplasm</keyword>
<keyword id="KW-0413">Isomerase</keyword>
<keyword id="KW-0697">Rotamase</keyword>
<accession>A1VE86</accession>
<reference key="1">
    <citation type="journal article" date="2009" name="Environ. Microbiol.">
        <title>Contribution of mobile genetic elements to Desulfovibrio vulgaris genome plasticity.</title>
        <authorList>
            <person name="Walker C.B."/>
            <person name="Stolyar S."/>
            <person name="Chivian D."/>
            <person name="Pinel N."/>
            <person name="Gabster J.A."/>
            <person name="Dehal P.S."/>
            <person name="He Z."/>
            <person name="Yang Z.K."/>
            <person name="Yen H.C."/>
            <person name="Zhou J."/>
            <person name="Wall J.D."/>
            <person name="Hazen T.C."/>
            <person name="Arkin A.P."/>
            <person name="Stahl D.A."/>
        </authorList>
    </citation>
    <scope>NUCLEOTIDE SEQUENCE [LARGE SCALE GENOMIC DNA]</scope>
    <source>
        <strain>DP4</strain>
    </source>
</reference>
<name>TIG_NITV4</name>
<gene>
    <name evidence="1" type="primary">tig</name>
    <name type="ordered locus">Dvul_1735</name>
</gene>
<proteinExistence type="inferred from homology"/>
<organism>
    <name type="scientific">Nitratidesulfovibrio vulgaris (strain DP4)</name>
    <name type="common">Desulfovibrio vulgaris</name>
    <dbReference type="NCBI Taxonomy" id="391774"/>
    <lineage>
        <taxon>Bacteria</taxon>
        <taxon>Pseudomonadati</taxon>
        <taxon>Thermodesulfobacteriota</taxon>
        <taxon>Desulfovibrionia</taxon>
        <taxon>Desulfovibrionales</taxon>
        <taxon>Desulfovibrionaceae</taxon>
        <taxon>Nitratidesulfovibrio</taxon>
    </lineage>
</organism>
<feature type="chain" id="PRO_1000022674" description="Trigger factor">
    <location>
        <begin position="1"/>
        <end position="433"/>
    </location>
</feature>
<feature type="domain" description="PPIase FKBP-type" evidence="1">
    <location>
        <begin position="163"/>
        <end position="248"/>
    </location>
</feature>
<comment type="function">
    <text evidence="1">Involved in protein export. Acts as a chaperone by maintaining the newly synthesized protein in an open conformation. Functions as a peptidyl-prolyl cis-trans isomerase.</text>
</comment>
<comment type="catalytic activity">
    <reaction evidence="1">
        <text>[protein]-peptidylproline (omega=180) = [protein]-peptidylproline (omega=0)</text>
        <dbReference type="Rhea" id="RHEA:16237"/>
        <dbReference type="Rhea" id="RHEA-COMP:10747"/>
        <dbReference type="Rhea" id="RHEA-COMP:10748"/>
        <dbReference type="ChEBI" id="CHEBI:83833"/>
        <dbReference type="ChEBI" id="CHEBI:83834"/>
        <dbReference type="EC" id="5.2.1.8"/>
    </reaction>
</comment>
<comment type="subcellular location">
    <subcellularLocation>
        <location>Cytoplasm</location>
    </subcellularLocation>
    <text evidence="1">About half TF is bound to the ribosome near the polypeptide exit tunnel while the other half is free in the cytoplasm.</text>
</comment>
<comment type="domain">
    <text evidence="1">Consists of 3 domains; the N-terminus binds the ribosome, the middle domain has PPIase activity, while the C-terminus has intrinsic chaperone activity on its own.</text>
</comment>
<comment type="similarity">
    <text evidence="1">Belongs to the FKBP-type PPIase family. Tig subfamily.</text>
</comment>